<comment type="function">
    <text evidence="2 3 4 5">Protein, which is both involved in DNA repair and protein ubiquitination, as part of the UV-DDB complex and DCX (DDB1-CUL4-X-box) complexes, respectively (By similarity). Core component of the UV-DDB complex (UV-damaged DNA-binding protein complex), a complex that recognizes UV-induced DNA damage and recruit proteins of the nucleotide excision repair pathway (the NER pathway) to initiate DNA repair (By similarity). The UV-DDB complex preferentially binds to cyclobutane pyrimidine dimers (CPD), 6-4 photoproducts (6-4 PP), apurinic sites and short mismatches (By similarity). Also functions as a component of numerous distinct DCX (DDB1-CUL4-X-box) E3 ubiquitin-protein ligase complexes which mediate the ubiquitination and subsequent proteasomal degradation of target proteins (By similarity). The functional specificity of the DCX E3 ubiquitin-protein ligase complex is determined by the variable substrate recognition component recruited by DDB1 (By similarity). Required for degradation of gig (PubMed:18381890). Required for genomic stability in the face of endogenous DNA lesions and for the response to MMS-induced DNA damage (PubMed:16428319). Required for normal wing development (PubMed:16428319).</text>
</comment>
<comment type="pathway">
    <text evidence="2">Protein modification; protein ubiquitination.</text>
</comment>
<comment type="subunit">
    <text evidence="2 5 6">Component of the UV-DDB complex which includes DDB1 and DDB2; the heterodimer dimerizes to give rise to a heterotetramer when bound to damaged DNA (By similarity). The UV-DDB complex interacts with monoubiquitinated histone H2A and binds to XPC via the DDB2 subunit (By similarity). Component of numerous DCX (DDB1-CUL4-X-box) E3 ubiquitin-protein ligase complexes which consist of a core of DDB1, CUL4A or CUL4B and RBX1 (By similarity). DDB1 may recruit specific substrate targeting subunits to the DCX complex (By similarity). These substrate targeting subunits are generally known as DCAF (DDB1- and CUL4-associated factor) or CDW (CUL4-DDB1-associated WD40-repeat) proteins (By similarity). Interacts with Fbw5 and gig (PubMed:18381890). May interact with ohgt (PubMed:27702999).</text>
</comment>
<comment type="subcellular location">
    <subcellularLocation>
        <location evidence="1">Cytoplasm</location>
    </subcellularLocation>
    <subcellularLocation>
        <location evidence="1">Nucleus</location>
    </subcellularLocation>
</comment>
<comment type="disruption phenotype">
    <text evidence="4">Reduced tissue growth in the wing imaginal disk.</text>
</comment>
<comment type="similarity">
    <text evidence="7">Belongs to the DDB1 family.</text>
</comment>
<protein>
    <recommendedName>
        <fullName>DNA damage-binding protein 1</fullName>
        <shortName>D-DDB1</shortName>
    </recommendedName>
    <alternativeName>
        <fullName>Damage-specific DNA-binding protein 1</fullName>
    </alternativeName>
    <alternativeName>
        <fullName>Protein piccolo</fullName>
    </alternativeName>
</protein>
<sequence>MSHHYVVTAQKPTAVVACLTGNFTSPTDLNLIIARNNQVEIDLVTPEGLRPLKEININGTIAVMRHFRPPDSNKDLLFILTRRYNVMILEARMVNDVITVVTKANGNVSDSVGIPSEGGVIAAIDPKARVIGMCLYQGLFTIIPMDKDASELKATNLRMDELNVYDVEFLHGCLNPTVIVIHKDSDGRHVKSHEINLRDKEFMKIAWKQDNVETEATMLIPVPSPIGGVIVIGRESIVYHDGSNYHAVAPLTFRQSTINCYARVSSNGLRYLLGNMDGQLYMLFLGTAETSKGVTVKDIKVEQLGEISIPECITYLDNGFLYIGARHGDSQLVRLNSEAIDGSYVVPVENFTNLAPILDIAVVDLDRQGQGQIITCSGSFKDGSLRIIRIGIGIQEHACIDLPGIKGMWSLKVGVDESPYENTLVLAFVGHTRILTLSGEEVEETEIPGFASDLQTFLCSNVDYDQLIQVTSDSVRLVSSATKALVAEWRPTGDRTIGVVSCNTTQILVASACDIFYIVIEDGSLREQSRRTLAYEVACLDITPLDETQKKSDLVAVGLWTDISAVILSLPDLETIYTEKLSGEIIPRSILMTTFEGIHYLLCALGDGSMYYFIMDQTTGQLTDKKKVTLGTQPTTLRTFRSLSTTNVFACSDRPTVIYSSNHKLVFSNVNLKEVNHMCSLNAQAYPDSLALANKNAVILGTIDEIQKLHIRTVPLGEGPRRIAYQESSQTFAVSTLRIDVHGRGGAKPLRNSASTQAQNITCSSNFLPKPGGGNSTAANAEVGQEIDVHNLLVIDQNTFEVLHAHQFVAPETISSLMSAKLGDDPNTYYVVATSLVIPEEPEPKVGRIIIFHYHENKLTQVAETKVDGTCYALVEFNGKVLAGIGSFVRLYEWTNEKELRMECNIQNMIAALFLKAKGDFILVGDLMRSITLLQHKQMEGIFVEIARDCEPKWMRAVEILDDDTFLGSETNGNLFVCQKDSAATTDEERQLLPELARFHLGDTVNVFRHGSLVMQNVGERTTPINGCVLYGTCNGAIGIVTQIPQDFYDFLHGLEERLKKIIKSVGKIEHTYYRNFQINSKVEPSEGFIDGDLIESFLDLSRDKMRDAVQGLELTLNGERKSADVEDVIKIVEDLTRMH</sequence>
<proteinExistence type="evidence at protein level"/>
<dbReference type="EMBL" id="AE014297">
    <property type="protein sequence ID" value="AAF54901.1"/>
    <property type="molecule type" value="Genomic_DNA"/>
</dbReference>
<dbReference type="EMBL" id="AF132145">
    <property type="protein sequence ID" value="AAD33592.1"/>
    <property type="molecule type" value="mRNA"/>
</dbReference>
<dbReference type="RefSeq" id="NP_650257.1">
    <property type="nucleotide sequence ID" value="NM_142000.3"/>
</dbReference>
<dbReference type="SMR" id="Q9XYZ5"/>
<dbReference type="BioGRID" id="66698">
    <property type="interactions" value="24"/>
</dbReference>
<dbReference type="FunCoup" id="Q9XYZ5">
    <property type="interactions" value="2996"/>
</dbReference>
<dbReference type="IntAct" id="Q9XYZ5">
    <property type="interactions" value="56"/>
</dbReference>
<dbReference type="STRING" id="7227.FBpp0082177"/>
<dbReference type="PaxDb" id="7227-FBpp0082177"/>
<dbReference type="EnsemblMetazoa" id="FBtr0082709">
    <property type="protein sequence ID" value="FBpp0082177"/>
    <property type="gene ID" value="FBgn0260962"/>
</dbReference>
<dbReference type="GeneID" id="41611"/>
<dbReference type="KEGG" id="dme:Dmel_CG7769"/>
<dbReference type="UCSC" id="CG7769-RA">
    <property type="organism name" value="d. melanogaster"/>
</dbReference>
<dbReference type="AGR" id="FB:FBgn0260962"/>
<dbReference type="CTD" id="41611"/>
<dbReference type="FlyBase" id="FBgn0260962">
    <property type="gene designation" value="pic"/>
</dbReference>
<dbReference type="VEuPathDB" id="VectorBase:FBgn0260962"/>
<dbReference type="eggNOG" id="KOG1897">
    <property type="taxonomic scope" value="Eukaryota"/>
</dbReference>
<dbReference type="GeneTree" id="ENSGT00950000183151"/>
<dbReference type="HOGENOM" id="CLU_002893_0_1_1"/>
<dbReference type="InParanoid" id="Q9XYZ5"/>
<dbReference type="OMA" id="HQDFLMR"/>
<dbReference type="OrthoDB" id="433457at2759"/>
<dbReference type="PhylomeDB" id="Q9XYZ5"/>
<dbReference type="Reactome" id="R-DME-110314">
    <property type="pathway name" value="Recognition of DNA damage by PCNA-containing replication complex"/>
</dbReference>
<dbReference type="Reactome" id="R-DME-5696394">
    <property type="pathway name" value="DNA Damage Recognition in GG-NER"/>
</dbReference>
<dbReference type="Reactome" id="R-DME-5696395">
    <property type="pathway name" value="Formation of Incision Complex in GG-NER"/>
</dbReference>
<dbReference type="Reactome" id="R-DME-5696400">
    <property type="pathway name" value="Dual Incision in GG-NER"/>
</dbReference>
<dbReference type="Reactome" id="R-DME-6781823">
    <property type="pathway name" value="Formation of TC-NER Pre-Incision Complex"/>
</dbReference>
<dbReference type="Reactome" id="R-DME-6782135">
    <property type="pathway name" value="Dual incision in TC-NER"/>
</dbReference>
<dbReference type="Reactome" id="R-DME-6782210">
    <property type="pathway name" value="Gap-filling DNA repair synthesis and ligation in TC-NER"/>
</dbReference>
<dbReference type="Reactome" id="R-DME-8951664">
    <property type="pathway name" value="Neddylation"/>
</dbReference>
<dbReference type="SignaLink" id="Q9XYZ5"/>
<dbReference type="UniPathway" id="UPA00143"/>
<dbReference type="BioGRID-ORCS" id="41611">
    <property type="hits" value="0 hits in 1 CRISPR screen"/>
</dbReference>
<dbReference type="GenomeRNAi" id="41611"/>
<dbReference type="PRO" id="PR:Q9XYZ5"/>
<dbReference type="Proteomes" id="UP000000803">
    <property type="component" value="Chromosome 3R"/>
</dbReference>
<dbReference type="Bgee" id="FBgn0260962">
    <property type="expression patterns" value="Expressed in eye disc (Drosophila) and 100 other cell types or tissues"/>
</dbReference>
<dbReference type="GO" id="GO:0005737">
    <property type="term" value="C:cytoplasm"/>
    <property type="evidence" value="ECO:0000250"/>
    <property type="project" value="UniProtKB"/>
</dbReference>
<dbReference type="GO" id="GO:0005634">
    <property type="term" value="C:nucleus"/>
    <property type="evidence" value="ECO:0000250"/>
    <property type="project" value="UniProtKB"/>
</dbReference>
<dbReference type="GO" id="GO:0035861">
    <property type="term" value="C:site of double-strand break"/>
    <property type="evidence" value="ECO:0000318"/>
    <property type="project" value="GO_Central"/>
</dbReference>
<dbReference type="GO" id="GO:0003677">
    <property type="term" value="F:DNA binding"/>
    <property type="evidence" value="ECO:0007669"/>
    <property type="project" value="UniProtKB-KW"/>
</dbReference>
<dbReference type="GO" id="GO:0006974">
    <property type="term" value="P:DNA damage response"/>
    <property type="evidence" value="ECO:0000315"/>
    <property type="project" value="UniProtKB"/>
</dbReference>
<dbReference type="GO" id="GO:0006281">
    <property type="term" value="P:DNA repair"/>
    <property type="evidence" value="ECO:0000318"/>
    <property type="project" value="GO_Central"/>
</dbReference>
<dbReference type="GO" id="GO:0007307">
    <property type="term" value="P:eggshell chorion gene amplification"/>
    <property type="evidence" value="ECO:0000314"/>
    <property type="project" value="FlyBase"/>
</dbReference>
<dbReference type="GO" id="GO:0045879">
    <property type="term" value="P:negative regulation of smoothened signaling pathway"/>
    <property type="evidence" value="ECO:0000315"/>
    <property type="project" value="FlyBase"/>
</dbReference>
<dbReference type="GO" id="GO:0045732">
    <property type="term" value="P:positive regulation of protein catabolic process"/>
    <property type="evidence" value="ECO:0000315"/>
    <property type="project" value="FlyBase"/>
</dbReference>
<dbReference type="GO" id="GO:0043161">
    <property type="term" value="P:proteasome-mediated ubiquitin-dependent protein catabolic process"/>
    <property type="evidence" value="ECO:0000318"/>
    <property type="project" value="GO_Central"/>
</dbReference>
<dbReference type="GO" id="GO:0016567">
    <property type="term" value="P:protein ubiquitination"/>
    <property type="evidence" value="ECO:0000314"/>
    <property type="project" value="UniProtKB"/>
</dbReference>
<dbReference type="GO" id="GO:0006511">
    <property type="term" value="P:ubiquitin-dependent protein catabolic process"/>
    <property type="evidence" value="ECO:0000250"/>
    <property type="project" value="UniProtKB"/>
</dbReference>
<dbReference type="GO" id="GO:0035220">
    <property type="term" value="P:wing disc development"/>
    <property type="evidence" value="ECO:0000315"/>
    <property type="project" value="UniProtKB"/>
</dbReference>
<dbReference type="FunFam" id="2.130.10.10:FF:000070">
    <property type="entry name" value="DNA damage-binding protein 1"/>
    <property type="match status" value="1"/>
</dbReference>
<dbReference type="FunFam" id="2.130.10.10:FF:000081">
    <property type="entry name" value="DNA damage-binding protein 1"/>
    <property type="match status" value="1"/>
</dbReference>
<dbReference type="FunFam" id="1.10.150.910:FF:000004">
    <property type="entry name" value="Pic"/>
    <property type="match status" value="1"/>
</dbReference>
<dbReference type="Gene3D" id="1.10.150.910">
    <property type="match status" value="1"/>
</dbReference>
<dbReference type="Gene3D" id="2.130.10.10">
    <property type="entry name" value="YVTN repeat-like/Quinoprotein amine dehydrogenase"/>
    <property type="match status" value="3"/>
</dbReference>
<dbReference type="InterPro" id="IPR018846">
    <property type="entry name" value="Beta-prop_RSE1/DDB1/CPSF1_1st"/>
</dbReference>
<dbReference type="InterPro" id="IPR004871">
    <property type="entry name" value="Cleavage/polyA-sp_fac_asu_C"/>
</dbReference>
<dbReference type="InterPro" id="IPR050358">
    <property type="entry name" value="RSE1/DDB1/CFT1/CPSF1"/>
</dbReference>
<dbReference type="InterPro" id="IPR015943">
    <property type="entry name" value="WD40/YVTN_repeat-like_dom_sf"/>
</dbReference>
<dbReference type="InterPro" id="IPR036322">
    <property type="entry name" value="WD40_repeat_dom_sf"/>
</dbReference>
<dbReference type="PANTHER" id="PTHR10644">
    <property type="entry name" value="DNA REPAIR/RNA PROCESSING CPSF FAMILY"/>
    <property type="match status" value="1"/>
</dbReference>
<dbReference type="Pfam" id="PF10433">
    <property type="entry name" value="Beta-prop_RSE1_1st"/>
    <property type="match status" value="1"/>
</dbReference>
<dbReference type="Pfam" id="PF23726">
    <property type="entry name" value="Beta-prop_RSE1_2nd"/>
    <property type="match status" value="1"/>
</dbReference>
<dbReference type="Pfam" id="PF03178">
    <property type="entry name" value="CPSF_A"/>
    <property type="match status" value="1"/>
</dbReference>
<dbReference type="SUPFAM" id="SSF50978">
    <property type="entry name" value="WD40 repeat-like"/>
    <property type="match status" value="1"/>
</dbReference>
<evidence type="ECO:0000250" key="1"/>
<evidence type="ECO:0000250" key="2">
    <source>
        <dbReference type="UniProtKB" id="Q16531"/>
    </source>
</evidence>
<evidence type="ECO:0000250" key="3">
    <source>
        <dbReference type="UniProtKB" id="Q3U1J4"/>
    </source>
</evidence>
<evidence type="ECO:0000269" key="4">
    <source>
    </source>
</evidence>
<evidence type="ECO:0000269" key="5">
    <source>
    </source>
</evidence>
<evidence type="ECO:0000269" key="6">
    <source>
    </source>
</evidence>
<evidence type="ECO:0000305" key="7"/>
<gene>
    <name type="primary">pic</name>
    <name type="synonym">DDB1</name>
    <name type="ORF">CG7769</name>
</gene>
<name>DDB1_DROME</name>
<feature type="chain" id="PRO_0000351086" description="DNA damage-binding protein 1">
    <location>
        <begin position="1"/>
        <end position="1140"/>
    </location>
</feature>
<keyword id="KW-0963">Cytoplasm</keyword>
<keyword id="KW-0227">DNA damage</keyword>
<keyword id="KW-0234">DNA repair</keyword>
<keyword id="KW-0238">DNA-binding</keyword>
<keyword id="KW-0539">Nucleus</keyword>
<keyword id="KW-1185">Reference proteome</keyword>
<keyword id="KW-0833">Ubl conjugation pathway</keyword>
<reference key="1">
    <citation type="journal article" date="2000" name="Science">
        <title>The genome sequence of Drosophila melanogaster.</title>
        <authorList>
            <person name="Adams M.D."/>
            <person name="Celniker S.E."/>
            <person name="Holt R.A."/>
            <person name="Evans C.A."/>
            <person name="Gocayne J.D."/>
            <person name="Amanatides P.G."/>
            <person name="Scherer S.E."/>
            <person name="Li P.W."/>
            <person name="Hoskins R.A."/>
            <person name="Galle R.F."/>
            <person name="George R.A."/>
            <person name="Lewis S.E."/>
            <person name="Richards S."/>
            <person name="Ashburner M."/>
            <person name="Henderson S.N."/>
            <person name="Sutton G.G."/>
            <person name="Wortman J.R."/>
            <person name="Yandell M.D."/>
            <person name="Zhang Q."/>
            <person name="Chen L.X."/>
            <person name="Brandon R.C."/>
            <person name="Rogers Y.-H.C."/>
            <person name="Blazej R.G."/>
            <person name="Champe M."/>
            <person name="Pfeiffer B.D."/>
            <person name="Wan K.H."/>
            <person name="Doyle C."/>
            <person name="Baxter E.G."/>
            <person name="Helt G."/>
            <person name="Nelson C.R."/>
            <person name="Miklos G.L.G."/>
            <person name="Abril J.F."/>
            <person name="Agbayani A."/>
            <person name="An H.-J."/>
            <person name="Andrews-Pfannkoch C."/>
            <person name="Baldwin D."/>
            <person name="Ballew R.M."/>
            <person name="Basu A."/>
            <person name="Baxendale J."/>
            <person name="Bayraktaroglu L."/>
            <person name="Beasley E.M."/>
            <person name="Beeson K.Y."/>
            <person name="Benos P.V."/>
            <person name="Berman B.P."/>
            <person name="Bhandari D."/>
            <person name="Bolshakov S."/>
            <person name="Borkova D."/>
            <person name="Botchan M.R."/>
            <person name="Bouck J."/>
            <person name="Brokstein P."/>
            <person name="Brottier P."/>
            <person name="Burtis K.C."/>
            <person name="Busam D.A."/>
            <person name="Butler H."/>
            <person name="Cadieu E."/>
            <person name="Center A."/>
            <person name="Chandra I."/>
            <person name="Cherry J.M."/>
            <person name="Cawley S."/>
            <person name="Dahlke C."/>
            <person name="Davenport L.B."/>
            <person name="Davies P."/>
            <person name="de Pablos B."/>
            <person name="Delcher A."/>
            <person name="Deng Z."/>
            <person name="Mays A.D."/>
            <person name="Dew I."/>
            <person name="Dietz S.M."/>
            <person name="Dodson K."/>
            <person name="Doup L.E."/>
            <person name="Downes M."/>
            <person name="Dugan-Rocha S."/>
            <person name="Dunkov B.C."/>
            <person name="Dunn P."/>
            <person name="Durbin K.J."/>
            <person name="Evangelista C.C."/>
            <person name="Ferraz C."/>
            <person name="Ferriera S."/>
            <person name="Fleischmann W."/>
            <person name="Fosler C."/>
            <person name="Gabrielian A.E."/>
            <person name="Garg N.S."/>
            <person name="Gelbart W.M."/>
            <person name="Glasser K."/>
            <person name="Glodek A."/>
            <person name="Gong F."/>
            <person name="Gorrell J.H."/>
            <person name="Gu Z."/>
            <person name="Guan P."/>
            <person name="Harris M."/>
            <person name="Harris N.L."/>
            <person name="Harvey D.A."/>
            <person name="Heiman T.J."/>
            <person name="Hernandez J.R."/>
            <person name="Houck J."/>
            <person name="Hostin D."/>
            <person name="Houston K.A."/>
            <person name="Howland T.J."/>
            <person name="Wei M.-H."/>
            <person name="Ibegwam C."/>
            <person name="Jalali M."/>
            <person name="Kalush F."/>
            <person name="Karpen G.H."/>
            <person name="Ke Z."/>
            <person name="Kennison J.A."/>
            <person name="Ketchum K.A."/>
            <person name="Kimmel B.E."/>
            <person name="Kodira C.D."/>
            <person name="Kraft C.L."/>
            <person name="Kravitz S."/>
            <person name="Kulp D."/>
            <person name="Lai Z."/>
            <person name="Lasko P."/>
            <person name="Lei Y."/>
            <person name="Levitsky A.A."/>
            <person name="Li J.H."/>
            <person name="Li Z."/>
            <person name="Liang Y."/>
            <person name="Lin X."/>
            <person name="Liu X."/>
            <person name="Mattei B."/>
            <person name="McIntosh T.C."/>
            <person name="McLeod M.P."/>
            <person name="McPherson D."/>
            <person name="Merkulov G."/>
            <person name="Milshina N.V."/>
            <person name="Mobarry C."/>
            <person name="Morris J."/>
            <person name="Moshrefi A."/>
            <person name="Mount S.M."/>
            <person name="Moy M."/>
            <person name="Murphy B."/>
            <person name="Murphy L."/>
            <person name="Muzny D.M."/>
            <person name="Nelson D.L."/>
            <person name="Nelson D.R."/>
            <person name="Nelson K.A."/>
            <person name="Nixon K."/>
            <person name="Nusskern D.R."/>
            <person name="Pacleb J.M."/>
            <person name="Palazzolo M."/>
            <person name="Pittman G.S."/>
            <person name="Pan S."/>
            <person name="Pollard J."/>
            <person name="Puri V."/>
            <person name="Reese M.G."/>
            <person name="Reinert K."/>
            <person name="Remington K."/>
            <person name="Saunders R.D.C."/>
            <person name="Scheeler F."/>
            <person name="Shen H."/>
            <person name="Shue B.C."/>
            <person name="Siden-Kiamos I."/>
            <person name="Simpson M."/>
            <person name="Skupski M.P."/>
            <person name="Smith T.J."/>
            <person name="Spier E."/>
            <person name="Spradling A.C."/>
            <person name="Stapleton M."/>
            <person name="Strong R."/>
            <person name="Sun E."/>
            <person name="Svirskas R."/>
            <person name="Tector C."/>
            <person name="Turner R."/>
            <person name="Venter E."/>
            <person name="Wang A.H."/>
            <person name="Wang X."/>
            <person name="Wang Z.-Y."/>
            <person name="Wassarman D.A."/>
            <person name="Weinstock G.M."/>
            <person name="Weissenbach J."/>
            <person name="Williams S.M."/>
            <person name="Woodage T."/>
            <person name="Worley K.C."/>
            <person name="Wu D."/>
            <person name="Yang S."/>
            <person name="Yao Q.A."/>
            <person name="Ye J."/>
            <person name="Yeh R.-F."/>
            <person name="Zaveri J.S."/>
            <person name="Zhan M."/>
            <person name="Zhang G."/>
            <person name="Zhao Q."/>
            <person name="Zheng L."/>
            <person name="Zheng X.H."/>
            <person name="Zhong F.N."/>
            <person name="Zhong W."/>
            <person name="Zhou X."/>
            <person name="Zhu S.C."/>
            <person name="Zhu X."/>
            <person name="Smith H.O."/>
            <person name="Gibbs R.A."/>
            <person name="Myers E.W."/>
            <person name="Rubin G.M."/>
            <person name="Venter J.C."/>
        </authorList>
    </citation>
    <scope>NUCLEOTIDE SEQUENCE [LARGE SCALE GENOMIC DNA]</scope>
    <source>
        <strain>Berkeley</strain>
    </source>
</reference>
<reference key="2">
    <citation type="journal article" date="2002" name="Genome Biol.">
        <title>Annotation of the Drosophila melanogaster euchromatic genome: a systematic review.</title>
        <authorList>
            <person name="Misra S."/>
            <person name="Crosby M.A."/>
            <person name="Mungall C.J."/>
            <person name="Matthews B.B."/>
            <person name="Campbell K.S."/>
            <person name="Hradecky P."/>
            <person name="Huang Y."/>
            <person name="Kaminker J.S."/>
            <person name="Millburn G.H."/>
            <person name="Prochnik S.E."/>
            <person name="Smith C.D."/>
            <person name="Tupy J.L."/>
            <person name="Whitfield E.J."/>
            <person name="Bayraktaroglu L."/>
            <person name="Berman B.P."/>
            <person name="Bettencourt B.R."/>
            <person name="Celniker S.E."/>
            <person name="de Grey A.D.N.J."/>
            <person name="Drysdale R.A."/>
            <person name="Harris N.L."/>
            <person name="Richter J."/>
            <person name="Russo S."/>
            <person name="Schroeder A.J."/>
            <person name="Shu S.Q."/>
            <person name="Stapleton M."/>
            <person name="Yamada C."/>
            <person name="Ashburner M."/>
            <person name="Gelbart W.M."/>
            <person name="Rubin G.M."/>
            <person name="Lewis S.E."/>
        </authorList>
    </citation>
    <scope>GENOME REANNOTATION</scope>
    <source>
        <strain>Berkeley</strain>
    </source>
</reference>
<reference key="3">
    <citation type="journal article" date="2000" name="Science">
        <title>A Drosophila complementary DNA resource.</title>
        <authorList>
            <person name="Rubin G.M."/>
            <person name="Hong L."/>
            <person name="Brokstein P."/>
            <person name="Evans-Holm M."/>
            <person name="Frise E."/>
            <person name="Stapleton M."/>
            <person name="Harvey D.A."/>
        </authorList>
    </citation>
    <scope>NUCLEOTIDE SEQUENCE [LARGE SCALE MRNA]</scope>
    <source>
        <tissue>Embryo</tissue>
    </source>
</reference>
<reference key="4">
    <citation type="journal article" date="2006" name="J. Biochem.">
        <title>Drosophila damaged DNA binding protein 1 contributes to genome stability in somatic cells.</title>
        <authorList>
            <person name="Shimanouchi K."/>
            <person name="Takata K."/>
            <person name="Yamaguchi M."/>
            <person name="Murakami S."/>
            <person name="Ishikawa G."/>
            <person name="Takeuchi R."/>
            <person name="Kanai Y."/>
            <person name="Ruike T."/>
            <person name="Nakamura R."/>
            <person name="Abe Y."/>
            <person name="Sakaguchi K."/>
        </authorList>
    </citation>
    <scope>FUNCTION</scope>
    <scope>DISRUPTION PHENOTYPE</scope>
</reference>
<reference key="5">
    <citation type="journal article" date="2008" name="Genes Dev.">
        <title>WD40 protein FBW5 promotes ubiquitination of tumor suppressor TSC2 by DDB1-CUL4-ROC1 ligase.</title>
        <authorList>
            <person name="Hu J."/>
            <person name="Zacharek S."/>
            <person name="He Y.J."/>
            <person name="Lee H."/>
            <person name="Shumway S."/>
            <person name="Duronio R.J."/>
            <person name="Xiong Y."/>
        </authorList>
    </citation>
    <scope>FUNCTION</scope>
    <scope>INTERACTION WITH FBW5 AND GIG</scope>
</reference>
<reference key="6">
    <citation type="journal article" date="2016" name="J. Biol. Chem.">
        <title>Ohgata, the single Drosophila ortholog of Human Cereblon, regulates insulin signaling-dependent organismic growth.</title>
        <authorList>
            <person name="Wakabayashi S."/>
            <person name="Sawamura N."/>
            <person name="Voelzmann A."/>
            <person name="Broemer M."/>
            <person name="Asahi T."/>
            <person name="Hoch M."/>
        </authorList>
    </citation>
    <scope>INTERACTION WITH OHGT</scope>
</reference>
<accession>Q9XYZ5</accession>
<organism>
    <name type="scientific">Drosophila melanogaster</name>
    <name type="common">Fruit fly</name>
    <dbReference type="NCBI Taxonomy" id="7227"/>
    <lineage>
        <taxon>Eukaryota</taxon>
        <taxon>Metazoa</taxon>
        <taxon>Ecdysozoa</taxon>
        <taxon>Arthropoda</taxon>
        <taxon>Hexapoda</taxon>
        <taxon>Insecta</taxon>
        <taxon>Pterygota</taxon>
        <taxon>Neoptera</taxon>
        <taxon>Endopterygota</taxon>
        <taxon>Diptera</taxon>
        <taxon>Brachycera</taxon>
        <taxon>Muscomorpha</taxon>
        <taxon>Ephydroidea</taxon>
        <taxon>Drosophilidae</taxon>
        <taxon>Drosophila</taxon>
        <taxon>Sophophora</taxon>
    </lineage>
</organism>